<sequence>MRKLTLAFAAASLLFTLNSAVVARASTPQPLWVGTNVAQLAEQAPIHWVSVAQIENSLLGRPPMAVGFDIDDTVLFSSPGFWRGQKTFSPGSEDYLKNPQFWEKMNNGWDEFSMPKEVARQLIAMHVKRGDSIWFVTGRSQTKTETVSKTLQDDFLIPAANMNPVIFAGDKPGQNTKTQWLQAKQIKVFYGDSDNDITAAREAGARGIRVLRAANSSYKPLPMAGALGEEVIVNSEY</sequence>
<organism>
    <name type="scientific">Klebsiella pneumoniae (strain 342)</name>
    <dbReference type="NCBI Taxonomy" id="507522"/>
    <lineage>
        <taxon>Bacteria</taxon>
        <taxon>Pseudomonadati</taxon>
        <taxon>Pseudomonadota</taxon>
        <taxon>Gammaproteobacteria</taxon>
        <taxon>Enterobacterales</taxon>
        <taxon>Enterobacteriaceae</taxon>
        <taxon>Klebsiella/Raoultella group</taxon>
        <taxon>Klebsiella</taxon>
        <taxon>Klebsiella pneumoniae complex</taxon>
    </lineage>
</organism>
<feature type="signal peptide" evidence="2">
    <location>
        <begin position="1"/>
        <end position="25"/>
    </location>
</feature>
<feature type="chain" id="PRO_0000415227" description="Class B acid phosphatase" evidence="2">
    <location>
        <begin position="26"/>
        <end position="237"/>
    </location>
</feature>
<feature type="active site" description="Nucleophile" evidence="1">
    <location>
        <position position="69"/>
    </location>
</feature>
<feature type="active site" description="Proton donor" evidence="1">
    <location>
        <position position="71"/>
    </location>
</feature>
<feature type="binding site" evidence="1">
    <location>
        <position position="69"/>
    </location>
    <ligand>
        <name>Mg(2+)</name>
        <dbReference type="ChEBI" id="CHEBI:18420"/>
    </ligand>
</feature>
<feature type="binding site" evidence="1">
    <location>
        <position position="71"/>
    </location>
    <ligand>
        <name>Mg(2+)</name>
        <dbReference type="ChEBI" id="CHEBI:18420"/>
    </ligand>
</feature>
<feature type="binding site" evidence="1">
    <location>
        <begin position="137"/>
        <end position="138"/>
    </location>
    <ligand>
        <name>substrate</name>
    </ligand>
</feature>
<feature type="binding site" evidence="1">
    <location>
        <position position="177"/>
    </location>
    <ligand>
        <name>substrate</name>
    </ligand>
</feature>
<feature type="binding site" evidence="1">
    <location>
        <position position="192"/>
    </location>
    <ligand>
        <name>Mg(2+)</name>
        <dbReference type="ChEBI" id="CHEBI:18420"/>
    </ligand>
</feature>
<reference evidence="4" key="1">
    <citation type="journal article" date="2008" name="PLoS Genet.">
        <title>Complete genome sequence of the N2-fixing broad host range endophyte Klebsiella pneumoniae 342 and virulence predictions verified in mice.</title>
        <authorList>
            <person name="Fouts D.E."/>
            <person name="Tyler H.L."/>
            <person name="DeBoy R.T."/>
            <person name="Daugherty S."/>
            <person name="Ren Q."/>
            <person name="Badger J.H."/>
            <person name="Durkin A.S."/>
            <person name="Huot H."/>
            <person name="Shrivastava S."/>
            <person name="Kothari S."/>
            <person name="Dodson R.J."/>
            <person name="Mohamoud Y."/>
            <person name="Khouri H."/>
            <person name="Roesch L.F.W."/>
            <person name="Krogfelt K.A."/>
            <person name="Struve C."/>
            <person name="Triplett E.W."/>
            <person name="Methe B.A."/>
        </authorList>
    </citation>
    <scope>NUCLEOTIDE SEQUENCE [LARGE SCALE GENOMIC DNA]</scope>
    <source>
        <strain evidence="3">342</strain>
    </source>
</reference>
<keyword id="KW-0378">Hydrolase</keyword>
<keyword id="KW-0460">Magnesium</keyword>
<keyword id="KW-0479">Metal-binding</keyword>
<keyword id="KW-0574">Periplasm</keyword>
<keyword id="KW-0732">Signal</keyword>
<protein>
    <recommendedName>
        <fullName evidence="1 4">Class B acid phosphatase</fullName>
        <shortName evidence="1">CBAP</shortName>
        <ecNumber evidence="1 4">3.1.3.2</ecNumber>
    </recommendedName>
</protein>
<evidence type="ECO:0000250" key="1">
    <source>
        <dbReference type="UniProtKB" id="P0AE22"/>
    </source>
</evidence>
<evidence type="ECO:0000255" key="2"/>
<evidence type="ECO:0000269" key="3">
    <source>
    </source>
</evidence>
<evidence type="ECO:0000312" key="4">
    <source>
        <dbReference type="EMBL" id="ACI07686.1"/>
    </source>
</evidence>
<dbReference type="EC" id="3.1.3.2" evidence="1 4"/>
<dbReference type="EMBL" id="CP000964">
    <property type="protein sequence ID" value="ACI07686.1"/>
    <property type="molecule type" value="Genomic_DNA"/>
</dbReference>
<dbReference type="SMR" id="B5XXX7"/>
<dbReference type="KEGG" id="kpe:KPK_5233"/>
<dbReference type="HOGENOM" id="CLU_081496_0_0_6"/>
<dbReference type="Proteomes" id="UP000001734">
    <property type="component" value="Chromosome"/>
</dbReference>
<dbReference type="GO" id="GO:0030288">
    <property type="term" value="C:outer membrane-bounded periplasmic space"/>
    <property type="evidence" value="ECO:0007669"/>
    <property type="project" value="InterPro"/>
</dbReference>
<dbReference type="GO" id="GO:0003993">
    <property type="term" value="F:acid phosphatase activity"/>
    <property type="evidence" value="ECO:0007669"/>
    <property type="project" value="UniProtKB-EC"/>
</dbReference>
<dbReference type="GO" id="GO:0046872">
    <property type="term" value="F:metal ion binding"/>
    <property type="evidence" value="ECO:0007669"/>
    <property type="project" value="UniProtKB-KW"/>
</dbReference>
<dbReference type="CDD" id="cd07499">
    <property type="entry name" value="HAD_CBAP"/>
    <property type="match status" value="1"/>
</dbReference>
<dbReference type="Gene3D" id="3.40.50.1000">
    <property type="entry name" value="HAD superfamily/HAD-like"/>
    <property type="match status" value="1"/>
</dbReference>
<dbReference type="InterPro" id="IPR005519">
    <property type="entry name" value="Acid_phosphat_B-like"/>
</dbReference>
<dbReference type="InterPro" id="IPR036412">
    <property type="entry name" value="HAD-like_sf"/>
</dbReference>
<dbReference type="InterPro" id="IPR010025">
    <property type="entry name" value="HAD-SF_ppase_IIIB_AphA"/>
</dbReference>
<dbReference type="InterPro" id="IPR023214">
    <property type="entry name" value="HAD_sf"/>
</dbReference>
<dbReference type="NCBIfam" id="TIGR01672">
    <property type="entry name" value="AphA"/>
    <property type="match status" value="1"/>
</dbReference>
<dbReference type="Pfam" id="PF03767">
    <property type="entry name" value="Acid_phosphat_B"/>
    <property type="match status" value="1"/>
</dbReference>
<dbReference type="PIRSF" id="PIRSF017818">
    <property type="entry name" value="Acid_Ptase_B"/>
    <property type="match status" value="1"/>
</dbReference>
<dbReference type="SFLD" id="SFLDG01127">
    <property type="entry name" value="C1.3:_Acid_Phosphatase_Like"/>
    <property type="match status" value="1"/>
</dbReference>
<dbReference type="SFLD" id="SFLDS00003">
    <property type="entry name" value="Haloacid_Dehalogenase"/>
    <property type="match status" value="1"/>
</dbReference>
<dbReference type="SUPFAM" id="SSF56784">
    <property type="entry name" value="HAD-like"/>
    <property type="match status" value="1"/>
</dbReference>
<name>APHA_KLEP3</name>
<accession>B5XXX7</accession>
<gene>
    <name evidence="4" type="primary">aphA</name>
    <name type="ordered locus">KPK_5233</name>
</gene>
<proteinExistence type="inferred from homology"/>
<comment type="function">
    <text evidence="1">Dephosphorylates several organic phosphate monoesters. Also has a phosphotransferase activity catalyzing the transfer of low-energy phosphate groups from organic phosphate monoesters to free hydroxyl groups of various organic compounds (By similarity).</text>
</comment>
<comment type="catalytic activity">
    <reaction evidence="1">
        <text>a phosphate monoester + H2O = an alcohol + phosphate</text>
        <dbReference type="Rhea" id="RHEA:15017"/>
        <dbReference type="ChEBI" id="CHEBI:15377"/>
        <dbReference type="ChEBI" id="CHEBI:30879"/>
        <dbReference type="ChEBI" id="CHEBI:43474"/>
        <dbReference type="ChEBI" id="CHEBI:67140"/>
        <dbReference type="EC" id="3.1.3.2"/>
    </reaction>
</comment>
<comment type="cofactor">
    <cofactor evidence="1">
        <name>Mg(2+)</name>
        <dbReference type="ChEBI" id="CHEBI:18420"/>
    </cofactor>
    <text evidence="1">Binds 1 Mg(2+) ion per subunit.</text>
</comment>
<comment type="subunit">
    <text evidence="1">Homotetramer.</text>
</comment>
<comment type="subcellular location">
    <subcellularLocation>
        <location evidence="1">Periplasm</location>
    </subcellularLocation>
</comment>
<comment type="similarity">
    <text evidence="1">Belongs to the class B bacterial acid phosphatase family.</text>
</comment>